<reference key="1">
    <citation type="journal article" date="2008" name="Appl. Environ. Microbiol.">
        <title>Genome of the epsilonproteobacterial chemolithoautotroph Sulfurimonas denitrificans.</title>
        <authorList>
            <person name="Sievert S.M."/>
            <person name="Scott K.M."/>
            <person name="Klotz M.G."/>
            <person name="Chain P.S.G."/>
            <person name="Hauser L.J."/>
            <person name="Hemp J."/>
            <person name="Huegler M."/>
            <person name="Land M."/>
            <person name="Lapidus A."/>
            <person name="Larimer F.W."/>
            <person name="Lucas S."/>
            <person name="Malfatti S.A."/>
            <person name="Meyer F."/>
            <person name="Paulsen I.T."/>
            <person name="Ren Q."/>
            <person name="Simon J."/>
            <person name="Bailey K."/>
            <person name="Diaz E."/>
            <person name="Fitzpatrick K.A."/>
            <person name="Glover B."/>
            <person name="Gwatney N."/>
            <person name="Korajkic A."/>
            <person name="Long A."/>
            <person name="Mobberley J.M."/>
            <person name="Pantry S.N."/>
            <person name="Pazder G."/>
            <person name="Peterson S."/>
            <person name="Quintanilla J.D."/>
            <person name="Sprinkle R."/>
            <person name="Stephens J."/>
            <person name="Thomas P."/>
            <person name="Vaughn R."/>
            <person name="Weber M.J."/>
            <person name="Wooten L.L."/>
        </authorList>
    </citation>
    <scope>NUCLEOTIDE SEQUENCE [LARGE SCALE GENOMIC DNA]</scope>
    <source>
        <strain>ATCC 33889 / DSM 1251</strain>
    </source>
</reference>
<evidence type="ECO:0000255" key="1">
    <source>
        <dbReference type="HAMAP-Rule" id="MF_01342"/>
    </source>
</evidence>
<evidence type="ECO:0000305" key="2"/>
<accession>Q30TV7</accession>
<protein>
    <recommendedName>
        <fullName evidence="1">Large ribosomal subunit protein uL16</fullName>
    </recommendedName>
    <alternativeName>
        <fullName evidence="2">50S ribosomal protein L16</fullName>
    </alternativeName>
</protein>
<proteinExistence type="inferred from homology"/>
<organism>
    <name type="scientific">Sulfurimonas denitrificans (strain ATCC 33889 / DSM 1251)</name>
    <name type="common">Thiomicrospira denitrificans (strain ATCC 33889 / DSM 1251)</name>
    <dbReference type="NCBI Taxonomy" id="326298"/>
    <lineage>
        <taxon>Bacteria</taxon>
        <taxon>Pseudomonadati</taxon>
        <taxon>Campylobacterota</taxon>
        <taxon>Epsilonproteobacteria</taxon>
        <taxon>Campylobacterales</taxon>
        <taxon>Sulfurimonadaceae</taxon>
        <taxon>Sulfurimonas</taxon>
    </lineage>
</organism>
<comment type="function">
    <text evidence="1">Binds 23S rRNA and is also seen to make contacts with the A and possibly P site tRNAs.</text>
</comment>
<comment type="subunit">
    <text evidence="1">Part of the 50S ribosomal subunit.</text>
</comment>
<comment type="similarity">
    <text evidence="1">Belongs to the universal ribosomal protein uL16 family.</text>
</comment>
<feature type="chain" id="PRO_0000251688" description="Large ribosomal subunit protein uL16">
    <location>
        <begin position="1"/>
        <end position="141"/>
    </location>
</feature>
<name>RL16_SULDN</name>
<dbReference type="EMBL" id="CP000153">
    <property type="protein sequence ID" value="ABB43574.1"/>
    <property type="molecule type" value="Genomic_DNA"/>
</dbReference>
<dbReference type="RefSeq" id="WP_011371929.1">
    <property type="nucleotide sequence ID" value="NC_007575.1"/>
</dbReference>
<dbReference type="SMR" id="Q30TV7"/>
<dbReference type="STRING" id="326298.Suden_0293"/>
<dbReference type="KEGG" id="tdn:Suden_0293"/>
<dbReference type="eggNOG" id="COG0197">
    <property type="taxonomic scope" value="Bacteria"/>
</dbReference>
<dbReference type="HOGENOM" id="CLU_078858_2_1_7"/>
<dbReference type="OrthoDB" id="9802589at2"/>
<dbReference type="Proteomes" id="UP000002714">
    <property type="component" value="Chromosome"/>
</dbReference>
<dbReference type="GO" id="GO:0022625">
    <property type="term" value="C:cytosolic large ribosomal subunit"/>
    <property type="evidence" value="ECO:0007669"/>
    <property type="project" value="TreeGrafter"/>
</dbReference>
<dbReference type="GO" id="GO:0019843">
    <property type="term" value="F:rRNA binding"/>
    <property type="evidence" value="ECO:0007669"/>
    <property type="project" value="UniProtKB-UniRule"/>
</dbReference>
<dbReference type="GO" id="GO:0003735">
    <property type="term" value="F:structural constituent of ribosome"/>
    <property type="evidence" value="ECO:0007669"/>
    <property type="project" value="InterPro"/>
</dbReference>
<dbReference type="GO" id="GO:0000049">
    <property type="term" value="F:tRNA binding"/>
    <property type="evidence" value="ECO:0007669"/>
    <property type="project" value="UniProtKB-KW"/>
</dbReference>
<dbReference type="GO" id="GO:0006412">
    <property type="term" value="P:translation"/>
    <property type="evidence" value="ECO:0007669"/>
    <property type="project" value="UniProtKB-UniRule"/>
</dbReference>
<dbReference type="CDD" id="cd01433">
    <property type="entry name" value="Ribosomal_L16_L10e"/>
    <property type="match status" value="1"/>
</dbReference>
<dbReference type="FunFam" id="3.90.1170.10:FF:000001">
    <property type="entry name" value="50S ribosomal protein L16"/>
    <property type="match status" value="1"/>
</dbReference>
<dbReference type="Gene3D" id="3.90.1170.10">
    <property type="entry name" value="Ribosomal protein L10e/L16"/>
    <property type="match status" value="1"/>
</dbReference>
<dbReference type="HAMAP" id="MF_01342">
    <property type="entry name" value="Ribosomal_uL16"/>
    <property type="match status" value="1"/>
</dbReference>
<dbReference type="InterPro" id="IPR047873">
    <property type="entry name" value="Ribosomal_uL16"/>
</dbReference>
<dbReference type="InterPro" id="IPR000114">
    <property type="entry name" value="Ribosomal_uL16_bact-type"/>
</dbReference>
<dbReference type="InterPro" id="IPR020798">
    <property type="entry name" value="Ribosomal_uL16_CS"/>
</dbReference>
<dbReference type="InterPro" id="IPR016180">
    <property type="entry name" value="Ribosomal_uL16_dom"/>
</dbReference>
<dbReference type="InterPro" id="IPR036920">
    <property type="entry name" value="Ribosomal_uL16_sf"/>
</dbReference>
<dbReference type="NCBIfam" id="TIGR01164">
    <property type="entry name" value="rplP_bact"/>
    <property type="match status" value="1"/>
</dbReference>
<dbReference type="PANTHER" id="PTHR12220">
    <property type="entry name" value="50S/60S RIBOSOMAL PROTEIN L16"/>
    <property type="match status" value="1"/>
</dbReference>
<dbReference type="PANTHER" id="PTHR12220:SF13">
    <property type="entry name" value="LARGE RIBOSOMAL SUBUNIT PROTEIN UL16M"/>
    <property type="match status" value="1"/>
</dbReference>
<dbReference type="Pfam" id="PF00252">
    <property type="entry name" value="Ribosomal_L16"/>
    <property type="match status" value="1"/>
</dbReference>
<dbReference type="PRINTS" id="PR00060">
    <property type="entry name" value="RIBOSOMALL16"/>
</dbReference>
<dbReference type="SUPFAM" id="SSF54686">
    <property type="entry name" value="Ribosomal protein L16p/L10e"/>
    <property type="match status" value="1"/>
</dbReference>
<dbReference type="PROSITE" id="PS00586">
    <property type="entry name" value="RIBOSOMAL_L16_1"/>
    <property type="match status" value="1"/>
</dbReference>
<dbReference type="PROSITE" id="PS00701">
    <property type="entry name" value="RIBOSOMAL_L16_2"/>
    <property type="match status" value="1"/>
</dbReference>
<sequence length="141" mass="16000">MLMPKRTKYRKMMKGRNRGYARSGYTLAFGDIALKAVEAGRINSRQIESARISATRHIKRNGKIWIRVFPAKPLTAKPLETRMGKGKGSVDQWVMNIKPGRIIFEMAGVPEELAREALTLALHKLPFKTKIITAEMSNEIF</sequence>
<keyword id="KW-1185">Reference proteome</keyword>
<keyword id="KW-0687">Ribonucleoprotein</keyword>
<keyword id="KW-0689">Ribosomal protein</keyword>
<keyword id="KW-0694">RNA-binding</keyword>
<keyword id="KW-0699">rRNA-binding</keyword>
<keyword id="KW-0820">tRNA-binding</keyword>
<gene>
    <name evidence="1" type="primary">rplP</name>
    <name type="ordered locus">Suden_0293</name>
</gene>